<organism>
    <name type="scientific">Janthinobacterium sp. (strain Marseille)</name>
    <name type="common">Minibacterium massiliensis</name>
    <dbReference type="NCBI Taxonomy" id="375286"/>
    <lineage>
        <taxon>Bacteria</taxon>
        <taxon>Pseudomonadati</taxon>
        <taxon>Pseudomonadota</taxon>
        <taxon>Betaproteobacteria</taxon>
        <taxon>Burkholderiales</taxon>
        <taxon>Oxalobacteraceae</taxon>
        <taxon>Janthinobacterium</taxon>
    </lineage>
</organism>
<sequence length="485" mass="52539">MHTKTLKELSALLHSKQISATELAQLFLDRIAQSDLNAFLHVDPALTLKEAALADQRLASGDTTVLTGIPIAHKDIFVTRDWRSTAGSKMLENYVSPFDATVVEQFKQAGMVHLGKLNCDEFAMGSSNENSYFGAVKNPWDKAAIPGGSSGGSAAAIAARLTPASTATDTGGSIRQPAALCGVTGIKPTYGSVSRFGMIAFASSLDQGGPIAKTAEDCGLLLNAMTGFDPRDSTSIERDKEDFTRDLNQPLQGLKIGLPREYFGAGLAADVEQAVRAALKEYEKLGATLVDISLPKTELSIPTYYVIAPAEASSNLSRFDGVRYGYRAKDYTDLSDMYRKTRAEGFGEEVKRRILVGAYVLSHGYYDAYYLQAQKIRRLIAQDFQQAFTQCDVIMGPVCPTVAWDLGDKADDPIANYLADIFTLSTSLAGLPGMSIPCGFGQGEKNSKRPVGLQIIGNYFAEAKLLNVAHQYQQATDWHLRQPAE</sequence>
<dbReference type="EC" id="6.3.5.7" evidence="1"/>
<dbReference type="EMBL" id="CP000269">
    <property type="protein sequence ID" value="ABR88658.1"/>
    <property type="molecule type" value="Genomic_DNA"/>
</dbReference>
<dbReference type="RefSeq" id="WP_011979420.1">
    <property type="nucleotide sequence ID" value="NC_009659.1"/>
</dbReference>
<dbReference type="SMR" id="A6SUD7"/>
<dbReference type="STRING" id="375286.mma_0194"/>
<dbReference type="KEGG" id="mms:mma_0194"/>
<dbReference type="eggNOG" id="COG0154">
    <property type="taxonomic scope" value="Bacteria"/>
</dbReference>
<dbReference type="HOGENOM" id="CLU_009600_0_3_4"/>
<dbReference type="OrthoDB" id="9811471at2"/>
<dbReference type="Proteomes" id="UP000006388">
    <property type="component" value="Chromosome"/>
</dbReference>
<dbReference type="GO" id="GO:0030956">
    <property type="term" value="C:glutamyl-tRNA(Gln) amidotransferase complex"/>
    <property type="evidence" value="ECO:0007669"/>
    <property type="project" value="InterPro"/>
</dbReference>
<dbReference type="GO" id="GO:0005524">
    <property type="term" value="F:ATP binding"/>
    <property type="evidence" value="ECO:0007669"/>
    <property type="project" value="UniProtKB-KW"/>
</dbReference>
<dbReference type="GO" id="GO:0050567">
    <property type="term" value="F:glutaminyl-tRNA synthase (glutamine-hydrolyzing) activity"/>
    <property type="evidence" value="ECO:0007669"/>
    <property type="project" value="UniProtKB-UniRule"/>
</dbReference>
<dbReference type="GO" id="GO:0006412">
    <property type="term" value="P:translation"/>
    <property type="evidence" value="ECO:0007669"/>
    <property type="project" value="UniProtKB-UniRule"/>
</dbReference>
<dbReference type="Gene3D" id="3.90.1300.10">
    <property type="entry name" value="Amidase signature (AS) domain"/>
    <property type="match status" value="1"/>
</dbReference>
<dbReference type="HAMAP" id="MF_00120">
    <property type="entry name" value="GatA"/>
    <property type="match status" value="1"/>
</dbReference>
<dbReference type="InterPro" id="IPR000120">
    <property type="entry name" value="Amidase"/>
</dbReference>
<dbReference type="InterPro" id="IPR020556">
    <property type="entry name" value="Amidase_CS"/>
</dbReference>
<dbReference type="InterPro" id="IPR023631">
    <property type="entry name" value="Amidase_dom"/>
</dbReference>
<dbReference type="InterPro" id="IPR036928">
    <property type="entry name" value="AS_sf"/>
</dbReference>
<dbReference type="InterPro" id="IPR004412">
    <property type="entry name" value="GatA"/>
</dbReference>
<dbReference type="NCBIfam" id="TIGR00132">
    <property type="entry name" value="gatA"/>
    <property type="match status" value="1"/>
</dbReference>
<dbReference type="PANTHER" id="PTHR11895:SF151">
    <property type="entry name" value="GLUTAMYL-TRNA(GLN) AMIDOTRANSFERASE SUBUNIT A"/>
    <property type="match status" value="1"/>
</dbReference>
<dbReference type="PANTHER" id="PTHR11895">
    <property type="entry name" value="TRANSAMIDASE"/>
    <property type="match status" value="1"/>
</dbReference>
<dbReference type="Pfam" id="PF01425">
    <property type="entry name" value="Amidase"/>
    <property type="match status" value="1"/>
</dbReference>
<dbReference type="SUPFAM" id="SSF75304">
    <property type="entry name" value="Amidase signature (AS) enzymes"/>
    <property type="match status" value="1"/>
</dbReference>
<dbReference type="PROSITE" id="PS00571">
    <property type="entry name" value="AMIDASES"/>
    <property type="match status" value="1"/>
</dbReference>
<evidence type="ECO:0000255" key="1">
    <source>
        <dbReference type="HAMAP-Rule" id="MF_00120"/>
    </source>
</evidence>
<proteinExistence type="inferred from homology"/>
<accession>A6SUD7</accession>
<reference key="1">
    <citation type="journal article" date="2007" name="PLoS Genet.">
        <title>Genome analysis of Minibacterium massiliensis highlights the convergent evolution of water-living bacteria.</title>
        <authorList>
            <person name="Audic S."/>
            <person name="Robert C."/>
            <person name="Campagna B."/>
            <person name="Parinello H."/>
            <person name="Claverie J.-M."/>
            <person name="Raoult D."/>
            <person name="Drancourt M."/>
        </authorList>
    </citation>
    <scope>NUCLEOTIDE SEQUENCE [LARGE SCALE GENOMIC DNA]</scope>
    <source>
        <strain>Marseille</strain>
    </source>
</reference>
<keyword id="KW-0067">ATP-binding</keyword>
<keyword id="KW-0436">Ligase</keyword>
<keyword id="KW-0547">Nucleotide-binding</keyword>
<keyword id="KW-0648">Protein biosynthesis</keyword>
<gene>
    <name evidence="1" type="primary">gatA</name>
    <name type="ordered locus">mma_0194</name>
</gene>
<comment type="function">
    <text evidence="1">Allows the formation of correctly charged Gln-tRNA(Gln) through the transamidation of misacylated Glu-tRNA(Gln) in organisms which lack glutaminyl-tRNA synthetase. The reaction takes place in the presence of glutamine and ATP through an activated gamma-phospho-Glu-tRNA(Gln).</text>
</comment>
<comment type="catalytic activity">
    <reaction evidence="1">
        <text>L-glutamyl-tRNA(Gln) + L-glutamine + ATP + H2O = L-glutaminyl-tRNA(Gln) + L-glutamate + ADP + phosphate + H(+)</text>
        <dbReference type="Rhea" id="RHEA:17521"/>
        <dbReference type="Rhea" id="RHEA-COMP:9681"/>
        <dbReference type="Rhea" id="RHEA-COMP:9684"/>
        <dbReference type="ChEBI" id="CHEBI:15377"/>
        <dbReference type="ChEBI" id="CHEBI:15378"/>
        <dbReference type="ChEBI" id="CHEBI:29985"/>
        <dbReference type="ChEBI" id="CHEBI:30616"/>
        <dbReference type="ChEBI" id="CHEBI:43474"/>
        <dbReference type="ChEBI" id="CHEBI:58359"/>
        <dbReference type="ChEBI" id="CHEBI:78520"/>
        <dbReference type="ChEBI" id="CHEBI:78521"/>
        <dbReference type="ChEBI" id="CHEBI:456216"/>
        <dbReference type="EC" id="6.3.5.7"/>
    </reaction>
</comment>
<comment type="subunit">
    <text evidence="1">Heterotrimer of A, B and C subunits.</text>
</comment>
<comment type="similarity">
    <text evidence="1">Belongs to the amidase family. GatA subfamily.</text>
</comment>
<feature type="chain" id="PRO_1000015842" description="Glutamyl-tRNA(Gln) amidotransferase subunit A">
    <location>
        <begin position="1"/>
        <end position="485"/>
    </location>
</feature>
<feature type="active site" description="Charge relay system" evidence="1">
    <location>
        <position position="74"/>
    </location>
</feature>
<feature type="active site" description="Charge relay system" evidence="1">
    <location>
        <position position="149"/>
    </location>
</feature>
<feature type="active site" description="Acyl-ester intermediate" evidence="1">
    <location>
        <position position="173"/>
    </location>
</feature>
<name>GATA_JANMA</name>
<protein>
    <recommendedName>
        <fullName evidence="1">Glutamyl-tRNA(Gln) amidotransferase subunit A</fullName>
        <shortName evidence="1">Glu-ADT subunit A</shortName>
        <ecNumber evidence="1">6.3.5.7</ecNumber>
    </recommendedName>
</protein>